<gene>
    <name type="primary">Nkx6-1</name>
    <name type="synonym">Nkx6.1</name>
    <name type="synonym">Nkx6a</name>
</gene>
<protein>
    <recommendedName>
        <fullName>Homeobox protein Nkx-6.1</fullName>
    </recommendedName>
    <alternativeName>
        <fullName>Homeobox protein NK-6 homolog A</fullName>
    </alternativeName>
</protein>
<evidence type="ECO:0000250" key="1"/>
<evidence type="ECO:0000250" key="2">
    <source>
        <dbReference type="UniProtKB" id="P78426"/>
    </source>
</evidence>
<evidence type="ECO:0000250" key="3">
    <source>
        <dbReference type="UniProtKB" id="Q99MA9"/>
    </source>
</evidence>
<evidence type="ECO:0000255" key="4">
    <source>
        <dbReference type="PROSITE-ProRule" id="PRU00108"/>
    </source>
</evidence>
<evidence type="ECO:0000256" key="5">
    <source>
        <dbReference type="SAM" id="MobiDB-lite"/>
    </source>
</evidence>
<accession>O35762</accession>
<keyword id="KW-0217">Developmental protein</keyword>
<keyword id="KW-0238">DNA-binding</keyword>
<keyword id="KW-0371">Homeobox</keyword>
<keyword id="KW-0488">Methylation</keyword>
<keyword id="KW-0539">Nucleus</keyword>
<keyword id="KW-1185">Reference proteome</keyword>
<organism>
    <name type="scientific">Rattus norvegicus</name>
    <name type="common">Rat</name>
    <dbReference type="NCBI Taxonomy" id="10116"/>
    <lineage>
        <taxon>Eukaryota</taxon>
        <taxon>Metazoa</taxon>
        <taxon>Chordata</taxon>
        <taxon>Craniata</taxon>
        <taxon>Vertebrata</taxon>
        <taxon>Euteleostomi</taxon>
        <taxon>Mammalia</taxon>
        <taxon>Eutheria</taxon>
        <taxon>Euarchontoglires</taxon>
        <taxon>Glires</taxon>
        <taxon>Rodentia</taxon>
        <taxon>Myomorpha</taxon>
        <taxon>Muroidea</taxon>
        <taxon>Muridae</taxon>
        <taxon>Murinae</taxon>
        <taxon>Rattus</taxon>
    </lineage>
</organism>
<feature type="chain" id="PRO_0000048954" description="Homeobox protein Nkx-6.1">
    <location>
        <begin position="1"/>
        <end position="365"/>
    </location>
</feature>
<feature type="DNA-binding region" description="Homeobox" evidence="4">
    <location>
        <begin position="237"/>
        <end position="296"/>
    </location>
</feature>
<feature type="region of interest" description="Disordered" evidence="5">
    <location>
        <begin position="35"/>
        <end position="136"/>
    </location>
</feature>
<feature type="region of interest" description="Repressor domain" evidence="1">
    <location>
        <begin position="102"/>
        <end position="269"/>
    </location>
</feature>
<feature type="region of interest" description="Disordered" evidence="5">
    <location>
        <begin position="295"/>
        <end position="365"/>
    </location>
</feature>
<feature type="region of interest" description="Involved in DNA-binding" evidence="1">
    <location>
        <begin position="307"/>
        <end position="365"/>
    </location>
</feature>
<feature type="compositionally biased region" description="Low complexity" evidence="5">
    <location>
        <begin position="48"/>
        <end position="59"/>
    </location>
</feature>
<feature type="compositionally biased region" description="Low complexity" evidence="5">
    <location>
        <begin position="69"/>
        <end position="92"/>
    </location>
</feature>
<feature type="compositionally biased region" description="Low complexity" evidence="5">
    <location>
        <begin position="110"/>
        <end position="136"/>
    </location>
</feature>
<feature type="compositionally biased region" description="Basic and acidic residues" evidence="5">
    <location>
        <begin position="305"/>
        <end position="318"/>
    </location>
</feature>
<feature type="modified residue" description="Asymmetric dimethylarginine" evidence="2">
    <location>
        <position position="190"/>
    </location>
</feature>
<reference key="1">
    <citation type="journal article" date="1999" name="FEBS Lett.">
        <title>Cloning and DNA-binding properties of the rat pancreatic beta-cell-specific factor Nkx6.1.</title>
        <authorList>
            <person name="Jorgensen M.C."/>
            <person name="Vestergard Petersen H."/>
            <person name="Ericson J."/>
            <person name="Madsen O.D."/>
            <person name="Serup P."/>
        </authorList>
    </citation>
    <scope>NUCLEOTIDE SEQUENCE [MRNA]</scope>
    <source>
        <strain>Wistar</strain>
        <tissue>Pancreatic islet</tissue>
    </source>
</reference>
<proteinExistence type="evidence at transcript level"/>
<sequence>MLAVGAMEGPRQSAFLLSSPPLAALHSMAEMKTPLYPAAYPPLPTGPPSSSSSSSSSSSPSPPLGAHNPGGLKPPAAGGLSSLGSPPQQLSAATPHGINDILSRPSMPVASGAALPSASPSGSSSSSSSSASATSASAAAAAAAAAAAAAASSPAGLLAGLPRFSSLSPPPPPPGLYFSPSAAAVAAVGRYPKPLAELPGRTPIFWPGVMQSPPWRDARLACTPHQGSILLDKDGKRKHTRPTFSGQQIFALEKTFEQTKYLAGPERARLAYSLGMTESQVKVWFQNRRTKWRKKHAAEMATAKKKQDSETERLKGTSENEEDDDDYNKPLDPNSDDEKITQLLKKHKSSGGSLLLHASEAEGSS</sequence>
<comment type="function">
    <text evidence="1 3">Transcription factor which binds to specific A/T-rich DNA sequences in the promoter regions of a number of genes. Involved in the development of insulin-producing beta cells in the islets of Langerhans at the secondary transition (By similarity). Together with NKX2-2 and IRX3 acts to restrict the generation of motor neurons to the appropriate region of the neural tube. Belongs to the class II proteins of neuronal progenitor factors, which are induced by SHH signals (By similarity).</text>
</comment>
<comment type="subcellular location">
    <subcellularLocation>
        <location evidence="3">Nucleus</location>
    </subcellularLocation>
</comment>
<comment type="tissue specificity">
    <text>Pancreatic beta cells.</text>
</comment>
<comment type="domain">
    <text>The C-terminal domain contributes to sequence-specific DNA-binding.</text>
</comment>
<dbReference type="EMBL" id="AF004431">
    <property type="protein sequence ID" value="AAB61665.1"/>
    <property type="molecule type" value="mRNA"/>
</dbReference>
<dbReference type="RefSeq" id="NP_113925.1">
    <property type="nucleotide sequence ID" value="NM_031737.2"/>
</dbReference>
<dbReference type="SMR" id="O35762"/>
<dbReference type="FunCoup" id="O35762">
    <property type="interactions" value="164"/>
</dbReference>
<dbReference type="STRING" id="10116.ENSRNOP00000002928"/>
<dbReference type="PhosphoSitePlus" id="O35762"/>
<dbReference type="PaxDb" id="10116-ENSRNOP00000002928"/>
<dbReference type="Ensembl" id="ENSRNOT00000002928.4">
    <property type="protein sequence ID" value="ENSRNOP00000002928.2"/>
    <property type="gene ID" value="ENSRNOG00000002149.4"/>
</dbReference>
<dbReference type="GeneID" id="65193"/>
<dbReference type="KEGG" id="rno:65193"/>
<dbReference type="AGR" id="RGD:69318"/>
<dbReference type="CTD" id="4825"/>
<dbReference type="RGD" id="69318">
    <property type="gene designation" value="Nkx6-1"/>
</dbReference>
<dbReference type="eggNOG" id="KOG0847">
    <property type="taxonomic scope" value="Eukaryota"/>
</dbReference>
<dbReference type="GeneTree" id="ENSGT00940000160897"/>
<dbReference type="HOGENOM" id="CLU_064820_0_0_1"/>
<dbReference type="InParanoid" id="O35762"/>
<dbReference type="OMA" id="QMDGTRQ"/>
<dbReference type="OrthoDB" id="6159439at2759"/>
<dbReference type="PhylomeDB" id="O35762"/>
<dbReference type="TreeFam" id="TF327063"/>
<dbReference type="PRO" id="PR:O35762"/>
<dbReference type="Proteomes" id="UP000002494">
    <property type="component" value="Chromosome 14"/>
</dbReference>
<dbReference type="Bgee" id="ENSRNOG00000002149">
    <property type="expression patterns" value="Expressed in esophagus and 2 other cell types or tissues"/>
</dbReference>
<dbReference type="GO" id="GO:0005634">
    <property type="term" value="C:nucleus"/>
    <property type="evidence" value="ECO:0000266"/>
    <property type="project" value="RGD"/>
</dbReference>
<dbReference type="GO" id="GO:0003682">
    <property type="term" value="F:chromatin binding"/>
    <property type="evidence" value="ECO:0000314"/>
    <property type="project" value="RGD"/>
</dbReference>
<dbReference type="GO" id="GO:0003700">
    <property type="term" value="F:DNA-binding transcription factor activity"/>
    <property type="evidence" value="ECO:0000314"/>
    <property type="project" value="RGD"/>
</dbReference>
<dbReference type="GO" id="GO:0000981">
    <property type="term" value="F:DNA-binding transcription factor activity, RNA polymerase II-specific"/>
    <property type="evidence" value="ECO:0000318"/>
    <property type="project" value="GO_Central"/>
</dbReference>
<dbReference type="GO" id="GO:0001227">
    <property type="term" value="F:DNA-binding transcription repressor activity, RNA polymerase II-specific"/>
    <property type="evidence" value="ECO:0000314"/>
    <property type="project" value="NTNU_SB"/>
</dbReference>
<dbReference type="GO" id="GO:0000978">
    <property type="term" value="F:RNA polymerase II cis-regulatory region sequence-specific DNA binding"/>
    <property type="evidence" value="ECO:0000314"/>
    <property type="project" value="NTNU_SB"/>
</dbReference>
<dbReference type="GO" id="GO:0043565">
    <property type="term" value="F:sequence-specific DNA binding"/>
    <property type="evidence" value="ECO:0000314"/>
    <property type="project" value="RGD"/>
</dbReference>
<dbReference type="GO" id="GO:0030154">
    <property type="term" value="P:cell differentiation"/>
    <property type="evidence" value="ECO:0000318"/>
    <property type="project" value="GO_Central"/>
</dbReference>
<dbReference type="GO" id="GO:0071345">
    <property type="term" value="P:cellular response to cytokine stimulus"/>
    <property type="evidence" value="ECO:0000270"/>
    <property type="project" value="RGD"/>
</dbReference>
<dbReference type="GO" id="GO:0071375">
    <property type="term" value="P:cellular response to peptide hormone stimulus"/>
    <property type="evidence" value="ECO:0000270"/>
    <property type="project" value="RGD"/>
</dbReference>
<dbReference type="GO" id="GO:0021953">
    <property type="term" value="P:central nervous system neuron differentiation"/>
    <property type="evidence" value="ECO:0000266"/>
    <property type="project" value="RGD"/>
</dbReference>
<dbReference type="GO" id="GO:0031018">
    <property type="term" value="P:endocrine pancreas development"/>
    <property type="evidence" value="ECO:0000266"/>
    <property type="project" value="RGD"/>
</dbReference>
<dbReference type="GO" id="GO:0048715">
    <property type="term" value="P:negative regulation of oligodendrocyte differentiation"/>
    <property type="evidence" value="ECO:0000266"/>
    <property type="project" value="RGD"/>
</dbReference>
<dbReference type="GO" id="GO:0000122">
    <property type="term" value="P:negative regulation of transcription by RNA polymerase II"/>
    <property type="evidence" value="ECO:0000314"/>
    <property type="project" value="NTNU_SB"/>
</dbReference>
<dbReference type="GO" id="GO:0022008">
    <property type="term" value="P:neurogenesis"/>
    <property type="evidence" value="ECO:0000315"/>
    <property type="project" value="RGD"/>
</dbReference>
<dbReference type="GO" id="GO:0030182">
    <property type="term" value="P:neuron differentiation"/>
    <property type="evidence" value="ECO:0000266"/>
    <property type="project" value="RGD"/>
</dbReference>
<dbReference type="GO" id="GO:0048709">
    <property type="term" value="P:oligodendrocyte differentiation"/>
    <property type="evidence" value="ECO:0000266"/>
    <property type="project" value="RGD"/>
</dbReference>
<dbReference type="GO" id="GO:0003310">
    <property type="term" value="P:pancreatic A cell differentiation"/>
    <property type="evidence" value="ECO:0000266"/>
    <property type="project" value="RGD"/>
</dbReference>
<dbReference type="GO" id="GO:0032024">
    <property type="term" value="P:positive regulation of insulin secretion"/>
    <property type="evidence" value="ECO:0000315"/>
    <property type="project" value="RGD"/>
</dbReference>
<dbReference type="GO" id="GO:0045666">
    <property type="term" value="P:positive regulation of neuron differentiation"/>
    <property type="evidence" value="ECO:0000266"/>
    <property type="project" value="RGD"/>
</dbReference>
<dbReference type="GO" id="GO:0048714">
    <property type="term" value="P:positive regulation of oligodendrocyte differentiation"/>
    <property type="evidence" value="ECO:0000266"/>
    <property type="project" value="RGD"/>
</dbReference>
<dbReference type="GO" id="GO:0030516">
    <property type="term" value="P:regulation of axon extension"/>
    <property type="evidence" value="ECO:0000266"/>
    <property type="project" value="RGD"/>
</dbReference>
<dbReference type="GO" id="GO:2001222">
    <property type="term" value="P:regulation of neuron migration"/>
    <property type="evidence" value="ECO:0000266"/>
    <property type="project" value="RGD"/>
</dbReference>
<dbReference type="GO" id="GO:0006357">
    <property type="term" value="P:regulation of transcription by RNA polymerase II"/>
    <property type="evidence" value="ECO:0000266"/>
    <property type="project" value="RGD"/>
</dbReference>
<dbReference type="GO" id="GO:0035094">
    <property type="term" value="P:response to nicotine"/>
    <property type="evidence" value="ECO:0000270"/>
    <property type="project" value="RGD"/>
</dbReference>
<dbReference type="GO" id="GO:0009410">
    <property type="term" value="P:response to xenobiotic stimulus"/>
    <property type="evidence" value="ECO:0000270"/>
    <property type="project" value="RGD"/>
</dbReference>
<dbReference type="GO" id="GO:0007224">
    <property type="term" value="P:smoothened signaling pathway"/>
    <property type="evidence" value="ECO:0000266"/>
    <property type="project" value="RGD"/>
</dbReference>
<dbReference type="GO" id="GO:0006366">
    <property type="term" value="P:transcription by RNA polymerase II"/>
    <property type="evidence" value="ECO:0000315"/>
    <property type="project" value="RGD"/>
</dbReference>
<dbReference type="GO" id="GO:0003323">
    <property type="term" value="P:type B pancreatic cell development"/>
    <property type="evidence" value="ECO:0000270"/>
    <property type="project" value="RGD"/>
</dbReference>
<dbReference type="GO" id="GO:0003309">
    <property type="term" value="P:type B pancreatic cell differentiation"/>
    <property type="evidence" value="ECO:0000266"/>
    <property type="project" value="RGD"/>
</dbReference>
<dbReference type="GO" id="GO:0044342">
    <property type="term" value="P:type B pancreatic cell proliferation"/>
    <property type="evidence" value="ECO:0000314"/>
    <property type="project" value="UniProtKB"/>
</dbReference>
<dbReference type="CDD" id="cd00086">
    <property type="entry name" value="homeodomain"/>
    <property type="match status" value="1"/>
</dbReference>
<dbReference type="FunFam" id="1.10.10.60:FF:000067">
    <property type="entry name" value="NK6 homeobox 1"/>
    <property type="match status" value="1"/>
</dbReference>
<dbReference type="Gene3D" id="1.10.10.60">
    <property type="entry name" value="Homeodomain-like"/>
    <property type="match status" value="1"/>
</dbReference>
<dbReference type="InterPro" id="IPR001356">
    <property type="entry name" value="HD"/>
</dbReference>
<dbReference type="InterPro" id="IPR020479">
    <property type="entry name" value="HD_metazoa"/>
</dbReference>
<dbReference type="InterPro" id="IPR017970">
    <property type="entry name" value="Homeobox_CS"/>
</dbReference>
<dbReference type="InterPro" id="IPR050394">
    <property type="entry name" value="Homeobox_NK-like"/>
</dbReference>
<dbReference type="InterPro" id="IPR009057">
    <property type="entry name" value="Homeodomain-like_sf"/>
</dbReference>
<dbReference type="InterPro" id="IPR000047">
    <property type="entry name" value="HTH_motif"/>
</dbReference>
<dbReference type="PANTHER" id="PTHR24340">
    <property type="entry name" value="HOMEOBOX PROTEIN NKX"/>
    <property type="match status" value="1"/>
</dbReference>
<dbReference type="PANTHER" id="PTHR24340:SF31">
    <property type="entry name" value="HOMEOBOX PROTEIN NKX-6.1"/>
    <property type="match status" value="1"/>
</dbReference>
<dbReference type="Pfam" id="PF00046">
    <property type="entry name" value="Homeodomain"/>
    <property type="match status" value="1"/>
</dbReference>
<dbReference type="PRINTS" id="PR00024">
    <property type="entry name" value="HOMEOBOX"/>
</dbReference>
<dbReference type="PRINTS" id="PR00031">
    <property type="entry name" value="HTHREPRESSR"/>
</dbReference>
<dbReference type="SMART" id="SM00389">
    <property type="entry name" value="HOX"/>
    <property type="match status" value="1"/>
</dbReference>
<dbReference type="SUPFAM" id="SSF46689">
    <property type="entry name" value="Homeodomain-like"/>
    <property type="match status" value="1"/>
</dbReference>
<dbReference type="PROSITE" id="PS00027">
    <property type="entry name" value="HOMEOBOX_1"/>
    <property type="match status" value="1"/>
</dbReference>
<dbReference type="PROSITE" id="PS50071">
    <property type="entry name" value="HOMEOBOX_2"/>
    <property type="match status" value="1"/>
</dbReference>
<name>NKX61_RAT</name>